<protein>
    <recommendedName>
        <fullName>Hematopoietically-expressed homeobox protein HHEX</fullName>
        <shortName>Homeobox protein HEX</shortName>
    </recommendedName>
    <alternativeName>
        <fullName>Homeobox protein PRH</fullName>
    </alternativeName>
    <alternativeName>
        <fullName evidence="9">Proline-rich homeodomain protein</fullName>
    </alternativeName>
</protein>
<organism>
    <name type="scientific">Homo sapiens</name>
    <name type="common">Human</name>
    <dbReference type="NCBI Taxonomy" id="9606"/>
    <lineage>
        <taxon>Eukaryota</taxon>
        <taxon>Metazoa</taxon>
        <taxon>Chordata</taxon>
        <taxon>Craniata</taxon>
        <taxon>Vertebrata</taxon>
        <taxon>Euteleostomi</taxon>
        <taxon>Mammalia</taxon>
        <taxon>Eutheria</taxon>
        <taxon>Euarchontoglires</taxon>
        <taxon>Primates</taxon>
        <taxon>Haplorrhini</taxon>
        <taxon>Catarrhini</taxon>
        <taxon>Hominidae</taxon>
        <taxon>Homo</taxon>
    </lineage>
</organism>
<sequence>MQYPHPGPAAGAVGVPLYAPTPLLQPAHPTPFYIEDILGRGPAAPTPAPTLPSPNSSFTSLVSPYRTPVYEPTPIHPAFSHHSAAALAAAYGPGGFGGPLYPFPRTVNDYTHALLRHDPLGKPLLWSPFLQRPLHKRKGGQVRFSNDQTIELEKKFETQKYLSPPERKRLAKMLQLSERQVKTWFQNRRAKWRRLKQENPQSNKKEELESLDSSCDQRQDLPSEQNKGASLDSSQCSPSPASQEDLESEISEDSDQEVDIEGDKSYFNAG</sequence>
<keyword id="KW-0002">3D-structure</keyword>
<keyword id="KW-0963">Cytoplasm</keyword>
<keyword id="KW-0217">Developmental protein</keyword>
<keyword id="KW-0221">Differentiation</keyword>
<keyword id="KW-0238">DNA-binding</keyword>
<keyword id="KW-0371">Homeobox</keyword>
<keyword id="KW-0539">Nucleus</keyword>
<keyword id="KW-0597">Phosphoprotein</keyword>
<keyword id="KW-1267">Proteomics identification</keyword>
<keyword id="KW-1185">Reference proteome</keyword>
<keyword id="KW-0678">Repressor</keyword>
<keyword id="KW-0804">Transcription</keyword>
<keyword id="KW-0805">Transcription regulation</keyword>
<keyword id="KW-0879">Wnt signaling pathway</keyword>
<accession>Q03014</accession>
<accession>B1AQ17</accession>
<accession>Q96CE9</accession>
<gene>
    <name type="primary">HHEX</name>
    <name type="synonym">HEX</name>
    <name type="synonym">PRH</name>
    <name type="synonym">PRHX</name>
</gene>
<reference key="1">
    <citation type="journal article" date="1992" name="Nucleic Acids Res.">
        <title>Identification of a novel vertebrate homeobox gene expressed in haematopoietic cells.</title>
        <authorList>
            <person name="Crompton M.R."/>
            <person name="Bartlett T.J."/>
            <person name="Macgregor A.D."/>
            <person name="Manfioletti G."/>
            <person name="Buratti E."/>
            <person name="Giancotti V."/>
            <person name="Goodwin G.H."/>
        </authorList>
    </citation>
    <scope>NUCLEOTIDE SEQUENCE [MRNA]</scope>
    <scope>TISSUE SPECIFICITY</scope>
</reference>
<reference key="2">
    <citation type="journal article" date="1993" name="Biochem. Biophys. Res. Commun.">
        <title>PCR cloning of an orphan homeobox gene (PRH) preferentially expressed in myeloid and liver cells.</title>
        <authorList>
            <person name="Hromas R.A."/>
            <person name="Collins S.J."/>
            <person name="Radich J."/>
        </authorList>
    </citation>
    <scope>NUCLEOTIDE SEQUENCE [MRNA]</scope>
    <scope>TISSUE SPECIFICITY</scope>
    <source>
        <tissue>Myeloid leukemia cell</tissue>
    </source>
</reference>
<reference key="3">
    <citation type="journal article" date="2004" name="Nat. Genet.">
        <title>Complete sequencing and characterization of 21,243 full-length human cDNAs.</title>
        <authorList>
            <person name="Ota T."/>
            <person name="Suzuki Y."/>
            <person name="Nishikawa T."/>
            <person name="Otsuki T."/>
            <person name="Sugiyama T."/>
            <person name="Irie R."/>
            <person name="Wakamatsu A."/>
            <person name="Hayashi K."/>
            <person name="Sato H."/>
            <person name="Nagai K."/>
            <person name="Kimura K."/>
            <person name="Makita H."/>
            <person name="Sekine M."/>
            <person name="Obayashi M."/>
            <person name="Nishi T."/>
            <person name="Shibahara T."/>
            <person name="Tanaka T."/>
            <person name="Ishii S."/>
            <person name="Yamamoto J."/>
            <person name="Saito K."/>
            <person name="Kawai Y."/>
            <person name="Isono Y."/>
            <person name="Nakamura Y."/>
            <person name="Nagahari K."/>
            <person name="Murakami K."/>
            <person name="Yasuda T."/>
            <person name="Iwayanagi T."/>
            <person name="Wagatsuma M."/>
            <person name="Shiratori A."/>
            <person name="Sudo H."/>
            <person name="Hosoiri T."/>
            <person name="Kaku Y."/>
            <person name="Kodaira H."/>
            <person name="Kondo H."/>
            <person name="Sugawara M."/>
            <person name="Takahashi M."/>
            <person name="Kanda K."/>
            <person name="Yokoi T."/>
            <person name="Furuya T."/>
            <person name="Kikkawa E."/>
            <person name="Omura Y."/>
            <person name="Abe K."/>
            <person name="Kamihara K."/>
            <person name="Katsuta N."/>
            <person name="Sato K."/>
            <person name="Tanikawa M."/>
            <person name="Yamazaki M."/>
            <person name="Ninomiya K."/>
            <person name="Ishibashi T."/>
            <person name="Yamashita H."/>
            <person name="Murakawa K."/>
            <person name="Fujimori K."/>
            <person name="Tanai H."/>
            <person name="Kimata M."/>
            <person name="Watanabe M."/>
            <person name="Hiraoka S."/>
            <person name="Chiba Y."/>
            <person name="Ishida S."/>
            <person name="Ono Y."/>
            <person name="Takiguchi S."/>
            <person name="Watanabe S."/>
            <person name="Yosida M."/>
            <person name="Hotuta T."/>
            <person name="Kusano J."/>
            <person name="Kanehori K."/>
            <person name="Takahashi-Fujii A."/>
            <person name="Hara H."/>
            <person name="Tanase T.-O."/>
            <person name="Nomura Y."/>
            <person name="Togiya S."/>
            <person name="Komai F."/>
            <person name="Hara R."/>
            <person name="Takeuchi K."/>
            <person name="Arita M."/>
            <person name="Imose N."/>
            <person name="Musashino K."/>
            <person name="Yuuki H."/>
            <person name="Oshima A."/>
            <person name="Sasaki N."/>
            <person name="Aotsuka S."/>
            <person name="Yoshikawa Y."/>
            <person name="Matsunawa H."/>
            <person name="Ichihara T."/>
            <person name="Shiohata N."/>
            <person name="Sano S."/>
            <person name="Moriya S."/>
            <person name="Momiyama H."/>
            <person name="Satoh N."/>
            <person name="Takami S."/>
            <person name="Terashima Y."/>
            <person name="Suzuki O."/>
            <person name="Nakagawa S."/>
            <person name="Senoh A."/>
            <person name="Mizoguchi H."/>
            <person name="Goto Y."/>
            <person name="Shimizu F."/>
            <person name="Wakebe H."/>
            <person name="Hishigaki H."/>
            <person name="Watanabe T."/>
            <person name="Sugiyama A."/>
            <person name="Takemoto M."/>
            <person name="Kawakami B."/>
            <person name="Yamazaki M."/>
            <person name="Watanabe K."/>
            <person name="Kumagai A."/>
            <person name="Itakura S."/>
            <person name="Fukuzumi Y."/>
            <person name="Fujimori Y."/>
            <person name="Komiyama M."/>
            <person name="Tashiro H."/>
            <person name="Tanigami A."/>
            <person name="Fujiwara T."/>
            <person name="Ono T."/>
            <person name="Yamada K."/>
            <person name="Fujii Y."/>
            <person name="Ozaki K."/>
            <person name="Hirao M."/>
            <person name="Ohmori Y."/>
            <person name="Kawabata A."/>
            <person name="Hikiji T."/>
            <person name="Kobatake N."/>
            <person name="Inagaki H."/>
            <person name="Ikema Y."/>
            <person name="Okamoto S."/>
            <person name="Okitani R."/>
            <person name="Kawakami T."/>
            <person name="Noguchi S."/>
            <person name="Itoh T."/>
            <person name="Shigeta K."/>
            <person name="Senba T."/>
            <person name="Matsumura K."/>
            <person name="Nakajima Y."/>
            <person name="Mizuno T."/>
            <person name="Morinaga M."/>
            <person name="Sasaki M."/>
            <person name="Togashi T."/>
            <person name="Oyama M."/>
            <person name="Hata H."/>
            <person name="Watanabe M."/>
            <person name="Komatsu T."/>
            <person name="Mizushima-Sugano J."/>
            <person name="Satoh T."/>
            <person name="Shirai Y."/>
            <person name="Takahashi Y."/>
            <person name="Nakagawa K."/>
            <person name="Okumura K."/>
            <person name="Nagase T."/>
            <person name="Nomura N."/>
            <person name="Kikuchi H."/>
            <person name="Masuho Y."/>
            <person name="Yamashita R."/>
            <person name="Nakai K."/>
            <person name="Yada T."/>
            <person name="Nakamura Y."/>
            <person name="Ohara O."/>
            <person name="Isogai T."/>
            <person name="Sugano S."/>
        </authorList>
    </citation>
    <scope>NUCLEOTIDE SEQUENCE [LARGE SCALE MRNA]</scope>
    <source>
        <tissue>Mammary gland</tissue>
    </source>
</reference>
<reference key="4">
    <citation type="journal article" date="2004" name="Nature">
        <title>The DNA sequence and comparative analysis of human chromosome 10.</title>
        <authorList>
            <person name="Deloukas P."/>
            <person name="Earthrowl M.E."/>
            <person name="Grafham D.V."/>
            <person name="Rubenfield M."/>
            <person name="French L."/>
            <person name="Steward C.A."/>
            <person name="Sims S.K."/>
            <person name="Jones M.C."/>
            <person name="Searle S."/>
            <person name="Scott C."/>
            <person name="Howe K."/>
            <person name="Hunt S.E."/>
            <person name="Andrews T.D."/>
            <person name="Gilbert J.G.R."/>
            <person name="Swarbreck D."/>
            <person name="Ashurst J.L."/>
            <person name="Taylor A."/>
            <person name="Battles J."/>
            <person name="Bird C.P."/>
            <person name="Ainscough R."/>
            <person name="Almeida J.P."/>
            <person name="Ashwell R.I.S."/>
            <person name="Ambrose K.D."/>
            <person name="Babbage A.K."/>
            <person name="Bagguley C.L."/>
            <person name="Bailey J."/>
            <person name="Banerjee R."/>
            <person name="Bates K."/>
            <person name="Beasley H."/>
            <person name="Bray-Allen S."/>
            <person name="Brown A.J."/>
            <person name="Brown J.Y."/>
            <person name="Burford D.C."/>
            <person name="Burrill W."/>
            <person name="Burton J."/>
            <person name="Cahill P."/>
            <person name="Camire D."/>
            <person name="Carter N.P."/>
            <person name="Chapman J.C."/>
            <person name="Clark S.Y."/>
            <person name="Clarke G."/>
            <person name="Clee C.M."/>
            <person name="Clegg S."/>
            <person name="Corby N."/>
            <person name="Coulson A."/>
            <person name="Dhami P."/>
            <person name="Dutta I."/>
            <person name="Dunn M."/>
            <person name="Faulkner L."/>
            <person name="Frankish A."/>
            <person name="Frankland J.A."/>
            <person name="Garner P."/>
            <person name="Garnett J."/>
            <person name="Gribble S."/>
            <person name="Griffiths C."/>
            <person name="Grocock R."/>
            <person name="Gustafson E."/>
            <person name="Hammond S."/>
            <person name="Harley J.L."/>
            <person name="Hart E."/>
            <person name="Heath P.D."/>
            <person name="Ho T.P."/>
            <person name="Hopkins B."/>
            <person name="Horne J."/>
            <person name="Howden P.J."/>
            <person name="Huckle E."/>
            <person name="Hynds C."/>
            <person name="Johnson C."/>
            <person name="Johnson D."/>
            <person name="Kana A."/>
            <person name="Kay M."/>
            <person name="Kimberley A.M."/>
            <person name="Kershaw J.K."/>
            <person name="Kokkinaki M."/>
            <person name="Laird G.K."/>
            <person name="Lawlor S."/>
            <person name="Lee H.M."/>
            <person name="Leongamornlert D.A."/>
            <person name="Laird G."/>
            <person name="Lloyd C."/>
            <person name="Lloyd D.M."/>
            <person name="Loveland J."/>
            <person name="Lovell J."/>
            <person name="McLaren S."/>
            <person name="McLay K.E."/>
            <person name="McMurray A."/>
            <person name="Mashreghi-Mohammadi M."/>
            <person name="Matthews L."/>
            <person name="Milne S."/>
            <person name="Nickerson T."/>
            <person name="Nguyen M."/>
            <person name="Overton-Larty E."/>
            <person name="Palmer S.A."/>
            <person name="Pearce A.V."/>
            <person name="Peck A.I."/>
            <person name="Pelan S."/>
            <person name="Phillimore B."/>
            <person name="Porter K."/>
            <person name="Rice C.M."/>
            <person name="Rogosin A."/>
            <person name="Ross M.T."/>
            <person name="Sarafidou T."/>
            <person name="Sehra H.K."/>
            <person name="Shownkeen R."/>
            <person name="Skuce C.D."/>
            <person name="Smith M."/>
            <person name="Standring L."/>
            <person name="Sycamore N."/>
            <person name="Tester J."/>
            <person name="Thorpe A."/>
            <person name="Torcasso W."/>
            <person name="Tracey A."/>
            <person name="Tromans A."/>
            <person name="Tsolas J."/>
            <person name="Wall M."/>
            <person name="Walsh J."/>
            <person name="Wang H."/>
            <person name="Weinstock K."/>
            <person name="West A.P."/>
            <person name="Willey D.L."/>
            <person name="Whitehead S.L."/>
            <person name="Wilming L."/>
            <person name="Wray P.W."/>
            <person name="Young L."/>
            <person name="Chen Y."/>
            <person name="Lovering R.C."/>
            <person name="Moschonas N.K."/>
            <person name="Siebert R."/>
            <person name="Fechtel K."/>
            <person name="Bentley D."/>
            <person name="Durbin R.M."/>
            <person name="Hubbard T."/>
            <person name="Doucette-Stamm L."/>
            <person name="Beck S."/>
            <person name="Smith D.R."/>
            <person name="Rogers J."/>
        </authorList>
    </citation>
    <scope>NUCLEOTIDE SEQUENCE [LARGE SCALE GENOMIC DNA]</scope>
</reference>
<reference key="5">
    <citation type="submission" date="2005-09" db="EMBL/GenBank/DDBJ databases">
        <authorList>
            <person name="Mural R.J."/>
            <person name="Istrail S."/>
            <person name="Sutton G."/>
            <person name="Florea L."/>
            <person name="Halpern A.L."/>
            <person name="Mobarry C.M."/>
            <person name="Lippert R."/>
            <person name="Walenz B."/>
            <person name="Shatkay H."/>
            <person name="Dew I."/>
            <person name="Miller J.R."/>
            <person name="Flanigan M.J."/>
            <person name="Edwards N.J."/>
            <person name="Bolanos R."/>
            <person name="Fasulo D."/>
            <person name="Halldorsson B.V."/>
            <person name="Hannenhalli S."/>
            <person name="Turner R."/>
            <person name="Yooseph S."/>
            <person name="Lu F."/>
            <person name="Nusskern D.R."/>
            <person name="Shue B.C."/>
            <person name="Zheng X.H."/>
            <person name="Zhong F."/>
            <person name="Delcher A.L."/>
            <person name="Huson D.H."/>
            <person name="Kravitz S.A."/>
            <person name="Mouchard L."/>
            <person name="Reinert K."/>
            <person name="Remington K.A."/>
            <person name="Clark A.G."/>
            <person name="Waterman M.S."/>
            <person name="Eichler E.E."/>
            <person name="Adams M.D."/>
            <person name="Hunkapiller M.W."/>
            <person name="Myers E.W."/>
            <person name="Venter J.C."/>
        </authorList>
    </citation>
    <scope>NUCLEOTIDE SEQUENCE [LARGE SCALE GENOMIC DNA]</scope>
</reference>
<reference key="6">
    <citation type="journal article" date="2004" name="Genome Res.">
        <title>The status, quality, and expansion of the NIH full-length cDNA project: the Mammalian Gene Collection (MGC).</title>
        <authorList>
            <consortium name="The MGC Project Team"/>
        </authorList>
    </citation>
    <scope>NUCLEOTIDE SEQUENCE [LARGE SCALE MRNA]</scope>
    <source>
        <tissue>Bone marrow</tissue>
        <tissue>Uterus</tissue>
    </source>
</reference>
<reference key="7">
    <citation type="journal article" date="1993" name="Nucleic Acids Res.">
        <title>HEX: a novel homeobox gene expressed during haematopoiesis and conserved between mouse and human.</title>
        <authorList>
            <person name="Bedford F.K."/>
            <person name="Ashworth A."/>
            <person name="Enver T."/>
            <person name="Wiedemann L.M."/>
        </authorList>
    </citation>
    <scope>NUCLEOTIDE SEQUENCE [MRNA] OF 122-270</scope>
    <scope>FUNCTION</scope>
    <scope>TISSUE SPECIFICITY</scope>
    <source>
        <tissue>Leukemia</tissue>
        <tissue>Peripheral blood monocyte</tissue>
    </source>
</reference>
<reference key="8">
    <citation type="journal article" date="2003" name="EMBO J.">
        <title>The proline-rich homeodomain protein, PRH, is a tissue-specific inhibitor of eIF4E-dependent cyclin D1 mRNA transport and growth.</title>
        <authorList>
            <person name="Topisirovic I."/>
            <person name="Culjkovic B."/>
            <person name="Cohen N."/>
            <person name="Perez J.M."/>
            <person name="Skrabanek L."/>
            <person name="Borden K.L."/>
        </authorList>
    </citation>
    <scope>FUNCTION</scope>
    <scope>INTERACTION WITH EIF4E</scope>
    <scope>SUBCELLULAR LOCATION</scope>
    <scope>MUTAGENESIS OF 23-LEU-LEU-24; ARG-188 AND ARG-189</scope>
</reference>
<reference key="9">
    <citation type="journal article" date="2010" name="J. Biol. Chem.">
        <title>Interaction between Hhex and SOX13 modulates Wnt/TCF activity.</title>
        <authorList>
            <person name="Marfil V."/>
            <person name="Moya M."/>
            <person name="Pierreux C.E."/>
            <person name="Castell J.V."/>
            <person name="Lemaigre F.P."/>
            <person name="Real F.X."/>
            <person name="Bort R."/>
        </authorList>
    </citation>
    <scope>FUNCTION</scope>
    <scope>INTERACTION WITH SOX13</scope>
</reference>
<reference key="10">
    <citation type="journal article" date="2013" name="J. Proteome Res.">
        <title>Toward a comprehensive characterization of a human cancer cell phosphoproteome.</title>
        <authorList>
            <person name="Zhou H."/>
            <person name="Di Palma S."/>
            <person name="Preisinger C."/>
            <person name="Peng M."/>
            <person name="Polat A.N."/>
            <person name="Heck A.J."/>
            <person name="Mohammed S."/>
        </authorList>
    </citation>
    <scope>PHOSPHORYLATION [LARGE SCALE ANALYSIS] AT SER-53</scope>
    <scope>IDENTIFICATION BY MASS SPECTROMETRY [LARGE SCALE ANALYSIS]</scope>
    <source>
        <tissue>Erythroleukemia</tissue>
    </source>
</reference>
<reference key="11">
    <citation type="journal article" date="1994" name="FEBS Lett.">
        <title>A homology-based molecular model of the proline-rich homeodomain protein Prh, from haematopoietic cells.</title>
        <authorList>
            <person name="Neidle S."/>
            <person name="Goodwin G.H."/>
        </authorList>
    </citation>
    <scope>3D-STRUCTURE MODELING OF 136-196</scope>
</reference>
<reference key="12">
    <citation type="submission" date="2006-11" db="PDB data bank">
        <title>Solution structure of RSGI RUH-028, a homeobox domain from human.</title>
        <authorList>
            <consortium name="RIKEN structural genomics initiative (RSGI)"/>
        </authorList>
    </citation>
    <scope>STRUCTURE BY NMR OF 138-194</scope>
</reference>
<feature type="chain" id="PRO_0000049074" description="Hematopoietically-expressed homeobox protein HHEX">
    <location>
        <begin position="1"/>
        <end position="270"/>
    </location>
</feature>
<feature type="DNA-binding region" description="Homeobox" evidence="2">
    <location>
        <begin position="137"/>
        <end position="196"/>
    </location>
</feature>
<feature type="region of interest" description="Interaction with SOX13" evidence="6">
    <location>
        <begin position="1"/>
        <end position="137"/>
    </location>
</feature>
<feature type="region of interest" description="Required for WNT signaling induction" evidence="6">
    <location>
        <begin position="137"/>
        <end position="270"/>
    </location>
</feature>
<feature type="region of interest" description="Disordered" evidence="3">
    <location>
        <begin position="194"/>
        <end position="270"/>
    </location>
</feature>
<feature type="compositionally biased region" description="Polar residues" evidence="3">
    <location>
        <begin position="222"/>
        <end position="241"/>
    </location>
</feature>
<feature type="compositionally biased region" description="Acidic residues" evidence="3">
    <location>
        <begin position="244"/>
        <end position="260"/>
    </location>
</feature>
<feature type="modified residue" description="Phosphoserine" evidence="11">
    <location>
        <position position="53"/>
    </location>
</feature>
<feature type="mutagenesis site" description="Abolishes interaction with EIF4E and inhibitory effect on EIF4E-mediated mRNA nuclear export." evidence="4">
    <original>LL</original>
    <variation>AA</variation>
    <location>
        <begin position="23"/>
        <end position="24"/>
    </location>
</feature>
<feature type="mutagenesis site" description="Loss of nuclear localization; when associated with A-189." evidence="4">
    <original>R</original>
    <variation>A</variation>
    <location>
        <position position="188"/>
    </location>
</feature>
<feature type="mutagenesis site" description="Loss of nuclear localization; when associated with A-188." evidence="4">
    <original>R</original>
    <variation>A</variation>
    <location>
        <position position="189"/>
    </location>
</feature>
<feature type="sequence conflict" description="In Ref. 2; AAA02988." evidence="10" ref="2">
    <original>L</original>
    <variation>V</variation>
    <location>
        <position position="115"/>
    </location>
</feature>
<feature type="sequence conflict" description="In Ref. 6; AAH14336." evidence="10" ref="6">
    <original>A</original>
    <variation>T</variation>
    <location>
        <position position="171"/>
    </location>
</feature>
<feature type="helix" evidence="12">
    <location>
        <begin position="146"/>
        <end position="158"/>
    </location>
</feature>
<feature type="helix" evidence="12">
    <location>
        <begin position="164"/>
        <end position="173"/>
    </location>
</feature>
<feature type="helix" evidence="12">
    <location>
        <begin position="178"/>
        <end position="194"/>
    </location>
</feature>
<proteinExistence type="evidence at protein level"/>
<name>HHEX_HUMAN</name>
<comment type="function">
    <text evidence="1 4 6 7">Recognizes the DNA sequence 5'-ATTAA-3' (By similarity). Transcriptional repressor (By similarity). Activator of WNT-mediated transcription in conjunction with CTNNB1 (PubMed:20028982). Establishes anterior identity at two levels; acts early to enhance canonical WNT-signaling by repressing expression of TLE4, and acts later to inhibit NODAL-signaling by directly targeting NODAL (By similarity). Inhibits EIF4E-mediated mRNA nuclear export (PubMed:12554669). May play a role in hematopoietic differentiation (PubMed:8096636).</text>
</comment>
<comment type="subunit">
    <text evidence="1 4 6">Interacts with CD81; the interaction prevents nuclear translocation of HHEX (By similarity). Interacts (via N-terminus) with SOX13; abolishes the SOX13-mediated inhibition of WNT-mediated transcriptional activity via competitive inhibition of the SOX13-TCF7 complex (PubMed:20028982). Interacts with EIF4E; the interaction inhibits EIF4E-mediated mRNA nuclear export (PubMed:12554669).</text>
</comment>
<comment type="interaction">
    <interactant intactId="EBI-747421">
        <id>Q03014</id>
    </interactant>
    <interactant intactId="EBI-11743294">
        <id>Q8IZP0-5</id>
        <label>ABI1</label>
    </interactant>
    <organismsDiffer>false</organismsDiffer>
    <experiments>3</experiments>
</comment>
<comment type="interaction">
    <interactant intactId="EBI-747421">
        <id>Q03014</id>
    </interactant>
    <interactant intactId="EBI-11096309">
        <id>Q9NYB9-2</id>
        <label>ABI2</label>
    </interactant>
    <organismsDiffer>false</organismsDiffer>
    <experiments>3</experiments>
</comment>
<comment type="interaction">
    <interactant intactId="EBI-747421">
        <id>Q03014</id>
    </interactant>
    <interactant intactId="EBI-1044593">
        <id>Q9NRW3</id>
        <label>APOBEC3C</label>
    </interactant>
    <organismsDiffer>false</organismsDiffer>
    <experiments>3</experiments>
</comment>
<comment type="interaction">
    <interactant intactId="EBI-747421">
        <id>Q03014</id>
    </interactant>
    <interactant intactId="EBI-3867333">
        <id>A8MQ03</id>
        <label>CYSRT1</label>
    </interactant>
    <organismsDiffer>false</organismsDiffer>
    <experiments>3</experiments>
</comment>
<comment type="interaction">
    <interactant intactId="EBI-747421">
        <id>Q03014</id>
    </interactant>
    <interactant intactId="EBI-747754">
        <id>P28799</id>
        <label>GRN</label>
    </interactant>
    <organismsDiffer>false</organismsDiffer>
    <experiments>3</experiments>
</comment>
<comment type="interaction">
    <interactant intactId="EBI-747421">
        <id>Q03014</id>
    </interactant>
    <interactant intactId="EBI-742808">
        <id>Q5VWX1</id>
        <label>KHDRBS2</label>
    </interactant>
    <organismsDiffer>false</organismsDiffer>
    <experiments>3</experiments>
</comment>
<comment type="interaction">
    <interactant intactId="EBI-747421">
        <id>Q03014</id>
    </interactant>
    <interactant intactId="EBI-11749135">
        <id>Q8IUG1</id>
        <label>KRTAP1-3</label>
    </interactant>
    <organismsDiffer>false</organismsDiffer>
    <experiments>3</experiments>
</comment>
<comment type="interaction">
    <interactant intactId="EBI-747421">
        <id>Q03014</id>
    </interactant>
    <interactant intactId="EBI-10172150">
        <id>P60370</id>
        <label>KRTAP10-5</label>
    </interactant>
    <organismsDiffer>false</organismsDiffer>
    <experiments>3</experiments>
</comment>
<comment type="interaction">
    <interactant intactId="EBI-747421">
        <id>Q03014</id>
    </interactant>
    <interactant intactId="EBI-12012928">
        <id>P60371</id>
        <label>KRTAP10-6</label>
    </interactant>
    <organismsDiffer>false</organismsDiffer>
    <experiments>3</experiments>
</comment>
<comment type="interaction">
    <interactant intactId="EBI-747421">
        <id>Q03014</id>
    </interactant>
    <interactant intactId="EBI-10172290">
        <id>P60409</id>
        <label>KRTAP10-7</label>
    </interactant>
    <organismsDiffer>false</organismsDiffer>
    <experiments>3</experiments>
</comment>
<comment type="interaction">
    <interactant intactId="EBI-747421">
        <id>Q03014</id>
    </interactant>
    <interactant intactId="EBI-10171774">
        <id>P60410</id>
        <label>KRTAP10-8</label>
    </interactant>
    <organismsDiffer>false</organismsDiffer>
    <experiments>6</experiments>
</comment>
<comment type="interaction">
    <interactant intactId="EBI-747421">
        <id>Q03014</id>
    </interactant>
    <interactant intactId="EBI-12811111">
        <id>Q8IUB9</id>
        <label>KRTAP19-1</label>
    </interactant>
    <organismsDiffer>false</organismsDiffer>
    <experiments>3</experiments>
</comment>
<comment type="interaction">
    <interactant intactId="EBI-747421">
        <id>Q03014</id>
    </interactant>
    <interactant intactId="EBI-14065470">
        <id>Q9BYR9</id>
        <label>KRTAP2-4</label>
    </interactant>
    <organismsDiffer>false</organismsDiffer>
    <experiments>3</experiments>
</comment>
<comment type="interaction">
    <interactant intactId="EBI-747421">
        <id>Q03014</id>
    </interactant>
    <interactant intactId="EBI-11987425">
        <id>Q6L8G8</id>
        <label>KRTAP5-7</label>
    </interactant>
    <organismsDiffer>false</organismsDiffer>
    <experiments>3</experiments>
</comment>
<comment type="interaction">
    <interactant intactId="EBI-747421">
        <id>Q03014</id>
    </interactant>
    <interactant intactId="EBI-12134621">
        <id>O75690</id>
        <label>KRTAP5-8</label>
    </interactant>
    <organismsDiffer>false</organismsDiffer>
    <experiments>3</experiments>
</comment>
<comment type="interaction">
    <interactant intactId="EBI-747421">
        <id>Q03014</id>
    </interactant>
    <interactant intactId="EBI-3958099">
        <id>P26371</id>
        <label>KRTAP5-9</label>
    </interactant>
    <organismsDiffer>false</organismsDiffer>
    <experiments>3</experiments>
</comment>
<comment type="interaction">
    <interactant intactId="EBI-747421">
        <id>Q03014</id>
    </interactant>
    <interactant intactId="EBI-12111050">
        <id>Q3LI64</id>
        <label>KRTAP6-1</label>
    </interactant>
    <organismsDiffer>false</organismsDiffer>
    <experiments>3</experiments>
</comment>
<comment type="interaction">
    <interactant intactId="EBI-747421">
        <id>Q03014</id>
    </interactant>
    <interactant intactId="EBI-11962084">
        <id>Q3LI66</id>
        <label>KRTAP6-2</label>
    </interactant>
    <organismsDiffer>false</organismsDiffer>
    <experiments>3</experiments>
</comment>
<comment type="interaction">
    <interactant intactId="EBI-747421">
        <id>Q03014</id>
    </interactant>
    <interactant intactId="EBI-22311199">
        <id>Q3LI67</id>
        <label>KRTAP6-3</label>
    </interactant>
    <organismsDiffer>false</organismsDiffer>
    <experiments>3</experiments>
</comment>
<comment type="interaction">
    <interactant intactId="EBI-747421">
        <id>Q03014</id>
    </interactant>
    <interactant intactId="EBI-724076">
        <id>Q99750</id>
        <label>MDFI</label>
    </interactant>
    <organismsDiffer>false</organismsDiffer>
    <experiments>3</experiments>
</comment>
<comment type="interaction">
    <interactant intactId="EBI-747421">
        <id>Q03014</id>
    </interactant>
    <interactant intactId="EBI-22310682">
        <id>P0DPK4</id>
        <label>NOTCH2NLC</label>
    </interactant>
    <organismsDiffer>false</organismsDiffer>
    <experiments>3</experiments>
</comment>
<comment type="interaction">
    <interactant intactId="EBI-747421">
        <id>Q03014</id>
    </interactant>
    <interactant intactId="EBI-357275">
        <id>Q99471</id>
        <label>PFDN5</label>
    </interactant>
    <organismsDiffer>false</organismsDiffer>
    <experiments>3</experiments>
</comment>
<comment type="interaction">
    <interactant intactId="EBI-747421">
        <id>Q03014</id>
    </interactant>
    <interactant intactId="EBI-1050964">
        <id>O43586</id>
        <label>PSTPIP1</label>
    </interactant>
    <organismsDiffer>false</organismsDiffer>
    <experiments>3</experiments>
</comment>
<comment type="interaction">
    <interactant intactId="EBI-747421">
        <id>Q03014</id>
    </interactant>
    <interactant intactId="EBI-8642021">
        <id>Q15415</id>
        <label>RBMY1J</label>
    </interactant>
    <organismsDiffer>false</organismsDiffer>
    <experiments>3</experiments>
</comment>
<comment type="interaction">
    <interactant intactId="EBI-747421">
        <id>Q03014</id>
    </interactant>
    <interactant intactId="EBI-11741437">
        <id>Q08117-2</id>
        <label>TLE5</label>
    </interactant>
    <organismsDiffer>false</organismsDiffer>
    <experiments>3</experiments>
</comment>
<comment type="interaction">
    <interactant intactId="EBI-747421">
        <id>Q03014</id>
    </interactant>
    <interactant intactId="EBI-11952721">
        <id>Q05BL1</id>
        <label>TP53BP2</label>
    </interactant>
    <organismsDiffer>false</organismsDiffer>
    <experiments>3</experiments>
</comment>
<comment type="interaction">
    <interactant intactId="EBI-747421">
        <id>Q03014</id>
    </interactant>
    <interactant intactId="EBI-720609">
        <id>O76024</id>
        <label>WFS1</label>
    </interactant>
    <organismsDiffer>false</organismsDiffer>
    <experiments>3</experiments>
</comment>
<comment type="subcellular location">
    <subcellularLocation>
        <location evidence="1">Nucleus</location>
    </subcellularLocation>
    <subcellularLocation>
        <location evidence="4">Nucleus</location>
        <location evidence="4">Nuclear body</location>
    </subcellularLocation>
    <subcellularLocation>
        <location evidence="4">Cytoplasm</location>
    </subcellularLocation>
</comment>
<comment type="tissue specificity">
    <text evidence="5 7 8">Liver and promyelocytic leukemia cell line HL-60.</text>
</comment>
<comment type="developmental stage">
    <text>Expressed during hematopoiesis.</text>
</comment>
<evidence type="ECO:0000250" key="1">
    <source>
        <dbReference type="UniProtKB" id="P43120"/>
    </source>
</evidence>
<evidence type="ECO:0000255" key="2">
    <source>
        <dbReference type="PROSITE-ProRule" id="PRU00108"/>
    </source>
</evidence>
<evidence type="ECO:0000256" key="3">
    <source>
        <dbReference type="SAM" id="MobiDB-lite"/>
    </source>
</evidence>
<evidence type="ECO:0000269" key="4">
    <source>
    </source>
</evidence>
<evidence type="ECO:0000269" key="5">
    <source>
    </source>
</evidence>
<evidence type="ECO:0000269" key="6">
    <source>
    </source>
</evidence>
<evidence type="ECO:0000269" key="7">
    <source>
    </source>
</evidence>
<evidence type="ECO:0000269" key="8">
    <source>
    </source>
</evidence>
<evidence type="ECO:0000303" key="9">
    <source>
    </source>
</evidence>
<evidence type="ECO:0000305" key="10"/>
<evidence type="ECO:0007744" key="11">
    <source>
    </source>
</evidence>
<evidence type="ECO:0007829" key="12">
    <source>
        <dbReference type="PDB" id="2E1O"/>
    </source>
</evidence>
<dbReference type="EMBL" id="X67235">
    <property type="protein sequence ID" value="CAA47661.1"/>
    <property type="molecule type" value="mRNA"/>
</dbReference>
<dbReference type="EMBL" id="L16499">
    <property type="protein sequence ID" value="AAA02988.1"/>
    <property type="molecule type" value="mRNA"/>
</dbReference>
<dbReference type="EMBL" id="AK314891">
    <property type="protein sequence ID" value="BAG37405.1"/>
    <property type="molecule type" value="mRNA"/>
</dbReference>
<dbReference type="EMBL" id="AL590080">
    <property type="status" value="NOT_ANNOTATED_CDS"/>
    <property type="molecule type" value="Genomic_DNA"/>
</dbReference>
<dbReference type="EMBL" id="CH471066">
    <property type="protein sequence ID" value="EAW50087.1"/>
    <property type="molecule type" value="Genomic_DNA"/>
</dbReference>
<dbReference type="EMBL" id="CH471066">
    <property type="protein sequence ID" value="EAW50088.1"/>
    <property type="molecule type" value="Genomic_DNA"/>
</dbReference>
<dbReference type="EMBL" id="BC014336">
    <property type="protein sequence ID" value="AAH14336.1"/>
    <property type="molecule type" value="mRNA"/>
</dbReference>
<dbReference type="EMBL" id="BC015110">
    <property type="protein sequence ID" value="AAH15110.1"/>
    <property type="molecule type" value="mRNA"/>
</dbReference>
<dbReference type="EMBL" id="BC050638">
    <property type="protein sequence ID" value="AAH50638.1"/>
    <property type="molecule type" value="mRNA"/>
</dbReference>
<dbReference type="EMBL" id="Z21533">
    <property type="protein sequence ID" value="CAA79730.1"/>
    <property type="molecule type" value="mRNA"/>
</dbReference>
<dbReference type="CCDS" id="CCDS7423.1"/>
<dbReference type="PIR" id="JN0767">
    <property type="entry name" value="JN0767"/>
</dbReference>
<dbReference type="RefSeq" id="NP_002720.1">
    <property type="nucleotide sequence ID" value="NM_002729.5"/>
</dbReference>
<dbReference type="PDB" id="2E1O">
    <property type="method" value="NMR"/>
    <property type="chains" value="A=138-194"/>
</dbReference>
<dbReference type="PDBsum" id="2E1O"/>
<dbReference type="SMR" id="Q03014"/>
<dbReference type="BioGRID" id="109335">
    <property type="interactions" value="44"/>
</dbReference>
<dbReference type="FunCoup" id="Q03014">
    <property type="interactions" value="1438"/>
</dbReference>
<dbReference type="IntAct" id="Q03014">
    <property type="interactions" value="32"/>
</dbReference>
<dbReference type="MINT" id="Q03014"/>
<dbReference type="STRING" id="9606.ENSP00000282728"/>
<dbReference type="GlyGen" id="Q03014">
    <property type="glycosylation" value="1 site"/>
</dbReference>
<dbReference type="iPTMnet" id="Q03014"/>
<dbReference type="PhosphoSitePlus" id="Q03014"/>
<dbReference type="BioMuta" id="HHEX"/>
<dbReference type="DMDM" id="547658"/>
<dbReference type="jPOST" id="Q03014"/>
<dbReference type="MassIVE" id="Q03014"/>
<dbReference type="PaxDb" id="9606-ENSP00000282728"/>
<dbReference type="PeptideAtlas" id="Q03014"/>
<dbReference type="ProteomicsDB" id="58161"/>
<dbReference type="Pumba" id="Q03014"/>
<dbReference type="Antibodypedia" id="16484">
    <property type="antibodies" value="521 antibodies from 35 providers"/>
</dbReference>
<dbReference type="DNASU" id="3087"/>
<dbReference type="Ensembl" id="ENST00000282728.10">
    <property type="protein sequence ID" value="ENSP00000282728.5"/>
    <property type="gene ID" value="ENSG00000152804.11"/>
</dbReference>
<dbReference type="GeneID" id="3087"/>
<dbReference type="KEGG" id="hsa:3087"/>
<dbReference type="MANE-Select" id="ENST00000282728.10">
    <property type="protein sequence ID" value="ENSP00000282728.5"/>
    <property type="RefSeq nucleotide sequence ID" value="NM_002729.5"/>
    <property type="RefSeq protein sequence ID" value="NP_002720.1"/>
</dbReference>
<dbReference type="UCSC" id="uc001kid.4">
    <property type="organism name" value="human"/>
</dbReference>
<dbReference type="AGR" id="HGNC:4901"/>
<dbReference type="CTD" id="3087"/>
<dbReference type="DisGeNET" id="3087"/>
<dbReference type="GeneCards" id="HHEX"/>
<dbReference type="HGNC" id="HGNC:4901">
    <property type="gene designation" value="HHEX"/>
</dbReference>
<dbReference type="HPA" id="ENSG00000152804">
    <property type="expression patterns" value="Tissue enhanced (bone marrow, liver, thyroid gland)"/>
</dbReference>
<dbReference type="MalaCards" id="HHEX"/>
<dbReference type="MIM" id="604420">
    <property type="type" value="gene"/>
</dbReference>
<dbReference type="neXtProt" id="NX_Q03014"/>
<dbReference type="OpenTargets" id="ENSG00000152804"/>
<dbReference type="PharmGKB" id="PA29274"/>
<dbReference type="VEuPathDB" id="HostDB:ENSG00000152804"/>
<dbReference type="eggNOG" id="KOG0483">
    <property type="taxonomic scope" value="Eukaryota"/>
</dbReference>
<dbReference type="GeneTree" id="ENSGT00940000161748"/>
<dbReference type="HOGENOM" id="CLU_081944_0_0_1"/>
<dbReference type="InParanoid" id="Q03014"/>
<dbReference type="OMA" id="FTGSFYP"/>
<dbReference type="OrthoDB" id="6159439at2759"/>
<dbReference type="PAN-GO" id="Q03014">
    <property type="GO annotations" value="3 GO annotations based on evolutionary models"/>
</dbReference>
<dbReference type="PhylomeDB" id="Q03014"/>
<dbReference type="TreeFam" id="TF325047"/>
<dbReference type="PathwayCommons" id="Q03014"/>
<dbReference type="Reactome" id="R-HSA-9925561">
    <property type="pathway name" value="Developmental Lineage of Pancreatic Acinar Cells"/>
</dbReference>
<dbReference type="SignaLink" id="Q03014"/>
<dbReference type="SIGNOR" id="Q03014"/>
<dbReference type="BioGRID-ORCS" id="3087">
    <property type="hits" value="34 hits in 1199 CRISPR screens"/>
</dbReference>
<dbReference type="EvolutionaryTrace" id="Q03014"/>
<dbReference type="GeneWiki" id="HHEX"/>
<dbReference type="GenomeRNAi" id="3087"/>
<dbReference type="Pharos" id="Q03014">
    <property type="development level" value="Tbio"/>
</dbReference>
<dbReference type="PRO" id="PR:Q03014"/>
<dbReference type="Proteomes" id="UP000005640">
    <property type="component" value="Chromosome 10"/>
</dbReference>
<dbReference type="RNAct" id="Q03014">
    <property type="molecule type" value="protein"/>
</dbReference>
<dbReference type="Bgee" id="ENSG00000152804">
    <property type="expression patterns" value="Expressed in secondary oocyte and 147 other cell types or tissues"/>
</dbReference>
<dbReference type="ExpressionAtlas" id="Q03014">
    <property type="expression patterns" value="baseline and differential"/>
</dbReference>
<dbReference type="GO" id="GO:0000785">
    <property type="term" value="C:chromatin"/>
    <property type="evidence" value="ECO:0000247"/>
    <property type="project" value="NTNU_SB"/>
</dbReference>
<dbReference type="GO" id="GO:0005737">
    <property type="term" value="C:cytoplasm"/>
    <property type="evidence" value="ECO:0000314"/>
    <property type="project" value="BHF-UCL"/>
</dbReference>
<dbReference type="GO" id="GO:0016604">
    <property type="term" value="C:nuclear body"/>
    <property type="evidence" value="ECO:0007669"/>
    <property type="project" value="UniProtKB-SubCell"/>
</dbReference>
<dbReference type="GO" id="GO:0005634">
    <property type="term" value="C:nucleus"/>
    <property type="evidence" value="ECO:0000314"/>
    <property type="project" value="BHF-UCL"/>
</dbReference>
<dbReference type="GO" id="GO:0032993">
    <property type="term" value="C:protein-DNA complex"/>
    <property type="evidence" value="ECO:0000314"/>
    <property type="project" value="BHF-UCL"/>
</dbReference>
<dbReference type="GO" id="GO:0008301">
    <property type="term" value="F:DNA binding, bending"/>
    <property type="evidence" value="ECO:0000314"/>
    <property type="project" value="BHF-UCL"/>
</dbReference>
<dbReference type="GO" id="GO:0001228">
    <property type="term" value="F:DNA-binding transcription activator activity, RNA polymerase II-specific"/>
    <property type="evidence" value="ECO:0000315"/>
    <property type="project" value="GO_Central"/>
</dbReference>
<dbReference type="GO" id="GO:0000981">
    <property type="term" value="F:DNA-binding transcription factor activity, RNA polymerase II-specific"/>
    <property type="evidence" value="ECO:0000247"/>
    <property type="project" value="NTNU_SB"/>
</dbReference>
<dbReference type="GO" id="GO:0140297">
    <property type="term" value="F:DNA-binding transcription factor binding"/>
    <property type="evidence" value="ECO:0000314"/>
    <property type="project" value="BHF-UCL"/>
</dbReference>
<dbReference type="GO" id="GO:0001227">
    <property type="term" value="F:DNA-binding transcription repressor activity, RNA polymerase II-specific"/>
    <property type="evidence" value="ECO:0000314"/>
    <property type="project" value="NTNU_SB"/>
</dbReference>
<dbReference type="GO" id="GO:0008190">
    <property type="term" value="F:eukaryotic initiation factor 4E binding"/>
    <property type="evidence" value="ECO:0000353"/>
    <property type="project" value="BHF-UCL"/>
</dbReference>
<dbReference type="GO" id="GO:0042803">
    <property type="term" value="F:protein homodimerization activity"/>
    <property type="evidence" value="ECO:0000353"/>
    <property type="project" value="BHF-UCL"/>
</dbReference>
<dbReference type="GO" id="GO:0000978">
    <property type="term" value="F:RNA polymerase II cis-regulatory region sequence-specific DNA binding"/>
    <property type="evidence" value="ECO:0000314"/>
    <property type="project" value="NTNU_SB"/>
</dbReference>
<dbReference type="GO" id="GO:0043565">
    <property type="term" value="F:sequence-specific DNA binding"/>
    <property type="evidence" value="ECO:0000314"/>
    <property type="project" value="BHF-UCL"/>
</dbReference>
<dbReference type="GO" id="GO:0017025">
    <property type="term" value="F:TBP-class protein binding"/>
    <property type="evidence" value="ECO:0000304"/>
    <property type="project" value="BHF-UCL"/>
</dbReference>
<dbReference type="GO" id="GO:0000976">
    <property type="term" value="F:transcription cis-regulatory region binding"/>
    <property type="evidence" value="ECO:0000314"/>
    <property type="project" value="BHF-UCL"/>
</dbReference>
<dbReference type="GO" id="GO:0045182">
    <property type="term" value="F:translation regulator activity"/>
    <property type="evidence" value="ECO:0000314"/>
    <property type="project" value="BHF-UCL"/>
</dbReference>
<dbReference type="GO" id="GO:0009952">
    <property type="term" value="P:anterior/posterior pattern specification"/>
    <property type="evidence" value="ECO:0000250"/>
    <property type="project" value="UniProtKB"/>
</dbReference>
<dbReference type="GO" id="GO:0030183">
    <property type="term" value="P:B cell differentiation"/>
    <property type="evidence" value="ECO:0000250"/>
    <property type="project" value="BHF-UCL"/>
</dbReference>
<dbReference type="GO" id="GO:0030154">
    <property type="term" value="P:cell differentiation"/>
    <property type="evidence" value="ECO:0000318"/>
    <property type="project" value="GO_Central"/>
</dbReference>
<dbReference type="GO" id="GO:0071103">
    <property type="term" value="P:DNA conformation change"/>
    <property type="evidence" value="ECO:0000314"/>
    <property type="project" value="BHF-UCL"/>
</dbReference>
<dbReference type="GO" id="GO:0016525">
    <property type="term" value="P:negative regulation of angiogenesis"/>
    <property type="evidence" value="ECO:0000250"/>
    <property type="project" value="BHF-UCL"/>
</dbReference>
<dbReference type="GO" id="GO:1904689">
    <property type="term" value="P:negative regulation of cytoplasmic translational initiation"/>
    <property type="evidence" value="ECO:0000314"/>
    <property type="project" value="BHF-UCL"/>
</dbReference>
<dbReference type="GO" id="GO:0045892">
    <property type="term" value="P:negative regulation of DNA-templated transcription"/>
    <property type="evidence" value="ECO:0000314"/>
    <property type="project" value="BHF-UCL"/>
</dbReference>
<dbReference type="GO" id="GO:0010944">
    <property type="term" value="P:negative regulation of transcription by competitive promoter binding"/>
    <property type="evidence" value="ECO:0000304"/>
    <property type="project" value="BHF-UCL"/>
</dbReference>
<dbReference type="GO" id="GO:0000122">
    <property type="term" value="P:negative regulation of transcription by RNA polymerase II"/>
    <property type="evidence" value="ECO:0000314"/>
    <property type="project" value="BHF-UCL"/>
</dbReference>
<dbReference type="GO" id="GO:0010621">
    <property type="term" value="P:negative regulation of transcription by transcription factor localization"/>
    <property type="evidence" value="ECO:0000305"/>
    <property type="project" value="BHF-UCL"/>
</dbReference>
<dbReference type="GO" id="GO:0030948">
    <property type="term" value="P:negative regulation of vascular endothelial growth factor receptor signaling pathway"/>
    <property type="evidence" value="ECO:0000250"/>
    <property type="project" value="BHF-UCL"/>
</dbReference>
<dbReference type="GO" id="GO:0090263">
    <property type="term" value="P:positive regulation of canonical Wnt signaling pathway"/>
    <property type="evidence" value="ECO:0000315"/>
    <property type="project" value="UniProtKB"/>
</dbReference>
<dbReference type="GO" id="GO:0045893">
    <property type="term" value="P:positive regulation of DNA-templated transcription"/>
    <property type="evidence" value="ECO:0000315"/>
    <property type="project" value="UniProtKB"/>
</dbReference>
<dbReference type="GO" id="GO:0045944">
    <property type="term" value="P:positive regulation of transcription by RNA polymerase II"/>
    <property type="evidence" value="ECO:0000314"/>
    <property type="project" value="BHF-UCL"/>
</dbReference>
<dbReference type="GO" id="GO:0030177">
    <property type="term" value="P:positive regulation of Wnt signaling pathway"/>
    <property type="evidence" value="ECO:0000250"/>
    <property type="project" value="UniProtKB"/>
</dbReference>
<dbReference type="GO" id="GO:0034504">
    <property type="term" value="P:protein localization to nucleus"/>
    <property type="evidence" value="ECO:0000314"/>
    <property type="project" value="BHF-UCL"/>
</dbReference>
<dbReference type="GO" id="GO:0070663">
    <property type="term" value="P:regulation of leukocyte proliferation"/>
    <property type="evidence" value="ECO:0000314"/>
    <property type="project" value="BHF-UCL"/>
</dbReference>
<dbReference type="GO" id="GO:0010793">
    <property type="term" value="P:regulation of mRNA export from nucleus"/>
    <property type="evidence" value="ECO:0000314"/>
    <property type="project" value="BHF-UCL"/>
</dbReference>
<dbReference type="GO" id="GO:0006357">
    <property type="term" value="P:regulation of transcription by RNA polymerase II"/>
    <property type="evidence" value="ECO:0000318"/>
    <property type="project" value="GO_Central"/>
</dbReference>
<dbReference type="GO" id="GO:0016055">
    <property type="term" value="P:Wnt signaling pathway"/>
    <property type="evidence" value="ECO:0007669"/>
    <property type="project" value="UniProtKB-KW"/>
</dbReference>
<dbReference type="CDD" id="cd00086">
    <property type="entry name" value="homeodomain"/>
    <property type="match status" value="1"/>
</dbReference>
<dbReference type="FunFam" id="1.10.10.60:FF:000178">
    <property type="entry name" value="hematopoietically-expressed homeobox protein HHEX"/>
    <property type="match status" value="1"/>
</dbReference>
<dbReference type="Gene3D" id="1.10.10.60">
    <property type="entry name" value="Homeodomain-like"/>
    <property type="match status" value="1"/>
</dbReference>
<dbReference type="InterPro" id="IPR001356">
    <property type="entry name" value="HD"/>
</dbReference>
<dbReference type="InterPro" id="IPR020479">
    <property type="entry name" value="HD_metazoa"/>
</dbReference>
<dbReference type="InterPro" id="IPR017970">
    <property type="entry name" value="Homeobox_CS"/>
</dbReference>
<dbReference type="InterPro" id="IPR051000">
    <property type="entry name" value="Homeobox_DNA-bind_prot"/>
</dbReference>
<dbReference type="InterPro" id="IPR009057">
    <property type="entry name" value="Homeodomain-like_sf"/>
</dbReference>
<dbReference type="PANTHER" id="PTHR24324:SF5">
    <property type="entry name" value="HEMATOPOIETICALLY-EXPRESSED HOMEOBOX PROTEIN HHEX"/>
    <property type="match status" value="1"/>
</dbReference>
<dbReference type="PANTHER" id="PTHR24324">
    <property type="entry name" value="HOMEOBOX PROTEIN HHEX"/>
    <property type="match status" value="1"/>
</dbReference>
<dbReference type="Pfam" id="PF00046">
    <property type="entry name" value="Homeodomain"/>
    <property type="match status" value="1"/>
</dbReference>
<dbReference type="PRINTS" id="PR00024">
    <property type="entry name" value="HOMEOBOX"/>
</dbReference>
<dbReference type="SMART" id="SM00389">
    <property type="entry name" value="HOX"/>
    <property type="match status" value="1"/>
</dbReference>
<dbReference type="SUPFAM" id="SSF46689">
    <property type="entry name" value="Homeodomain-like"/>
    <property type="match status" value="1"/>
</dbReference>
<dbReference type="PROSITE" id="PS00027">
    <property type="entry name" value="HOMEOBOX_1"/>
    <property type="match status" value="1"/>
</dbReference>
<dbReference type="PROSITE" id="PS50071">
    <property type="entry name" value="HOMEOBOX_2"/>
    <property type="match status" value="1"/>
</dbReference>